<proteinExistence type="inferred from homology"/>
<organism>
    <name type="scientific">Anaplasma marginale (strain St. Maries)</name>
    <dbReference type="NCBI Taxonomy" id="234826"/>
    <lineage>
        <taxon>Bacteria</taxon>
        <taxon>Pseudomonadati</taxon>
        <taxon>Pseudomonadota</taxon>
        <taxon>Alphaproteobacteria</taxon>
        <taxon>Rickettsiales</taxon>
        <taxon>Anaplasmataceae</taxon>
        <taxon>Anaplasma</taxon>
    </lineage>
</organism>
<gene>
    <name evidence="1" type="primary">atpB</name>
    <name type="ordered locus">AM1110</name>
</gene>
<name>ATP6_ANAMM</name>
<feature type="chain" id="PRO_0000362234" description="ATP synthase subunit a">
    <location>
        <begin position="1"/>
        <end position="241"/>
    </location>
</feature>
<feature type="transmembrane region" description="Helical" evidence="1">
    <location>
        <begin position="27"/>
        <end position="47"/>
    </location>
</feature>
<feature type="transmembrane region" description="Helical" evidence="1">
    <location>
        <begin position="52"/>
        <end position="72"/>
    </location>
</feature>
<feature type="transmembrane region" description="Helical" evidence="1">
    <location>
        <begin position="87"/>
        <end position="107"/>
    </location>
</feature>
<feature type="transmembrane region" description="Helical" evidence="1">
    <location>
        <begin position="112"/>
        <end position="132"/>
    </location>
</feature>
<feature type="transmembrane region" description="Helical" evidence="1">
    <location>
        <begin position="142"/>
        <end position="162"/>
    </location>
</feature>
<feature type="transmembrane region" description="Helical" evidence="1">
    <location>
        <begin position="175"/>
        <end position="195"/>
    </location>
</feature>
<feature type="transmembrane region" description="Helical" evidence="1">
    <location>
        <begin position="198"/>
        <end position="218"/>
    </location>
</feature>
<evidence type="ECO:0000255" key="1">
    <source>
        <dbReference type="HAMAP-Rule" id="MF_01393"/>
    </source>
</evidence>
<evidence type="ECO:0000305" key="2"/>
<sequence>MSPLEQFRVTKLLDIPALWGIDLSFTNCSLVMVLASVSSILLLCWALRKINVVPGPSQTAVELIYGFVANTLESNAGAEGLRYIPLVMTTFLFVLACNLVGILPFGFTATSHLSVTLALSLVVCTAITVIGFRHQGLHFLRIFLPEGTPLWLAPMMVFIKLFAYVARPVSLAIRLAANMIAGHTIIAVIADFVLKMHLVLAPLPFAFIMGLIAFEIFVAILQAYIFTVLTTVYLSDAVAGH</sequence>
<reference key="1">
    <citation type="journal article" date="2005" name="Proc. Natl. Acad. Sci. U.S.A.">
        <title>Complete genome sequencing of Anaplasma marginale reveals that the surface is skewed to two superfamilies of outer membrane proteins.</title>
        <authorList>
            <person name="Brayton K.A."/>
            <person name="Kappmeyer L.S."/>
            <person name="Herndon D.R."/>
            <person name="Dark M.J."/>
            <person name="Tibbals D.L."/>
            <person name="Palmer G.H."/>
            <person name="McGuire T.C."/>
            <person name="Knowles D.P. Jr."/>
        </authorList>
    </citation>
    <scope>NUCLEOTIDE SEQUENCE [LARGE SCALE GENOMIC DNA]</scope>
    <source>
        <strain>St. Maries</strain>
    </source>
</reference>
<dbReference type="EMBL" id="CP000030">
    <property type="protein sequence ID" value="AAV86962.1"/>
    <property type="status" value="ALT_INIT"/>
    <property type="molecule type" value="Genomic_DNA"/>
</dbReference>
<dbReference type="RefSeq" id="WP_041659947.1">
    <property type="nucleotide sequence ID" value="NC_004842.2"/>
</dbReference>
<dbReference type="SMR" id="Q5P9R8"/>
<dbReference type="KEGG" id="ama:AM1110"/>
<dbReference type="HOGENOM" id="CLU_041018_0_2_5"/>
<dbReference type="GO" id="GO:0005886">
    <property type="term" value="C:plasma membrane"/>
    <property type="evidence" value="ECO:0007669"/>
    <property type="project" value="UniProtKB-SubCell"/>
</dbReference>
<dbReference type="GO" id="GO:0045259">
    <property type="term" value="C:proton-transporting ATP synthase complex"/>
    <property type="evidence" value="ECO:0007669"/>
    <property type="project" value="UniProtKB-KW"/>
</dbReference>
<dbReference type="GO" id="GO:0046933">
    <property type="term" value="F:proton-transporting ATP synthase activity, rotational mechanism"/>
    <property type="evidence" value="ECO:0007669"/>
    <property type="project" value="UniProtKB-UniRule"/>
</dbReference>
<dbReference type="CDD" id="cd00310">
    <property type="entry name" value="ATP-synt_Fo_a_6"/>
    <property type="match status" value="1"/>
</dbReference>
<dbReference type="Gene3D" id="1.20.120.220">
    <property type="entry name" value="ATP synthase, F0 complex, subunit A"/>
    <property type="match status" value="1"/>
</dbReference>
<dbReference type="HAMAP" id="MF_01393">
    <property type="entry name" value="ATP_synth_a_bact"/>
    <property type="match status" value="1"/>
</dbReference>
<dbReference type="InterPro" id="IPR000568">
    <property type="entry name" value="ATP_synth_F0_asu"/>
</dbReference>
<dbReference type="InterPro" id="IPR023011">
    <property type="entry name" value="ATP_synth_F0_asu_AS"/>
</dbReference>
<dbReference type="InterPro" id="IPR045083">
    <property type="entry name" value="ATP_synth_F0_asu_bact/mt"/>
</dbReference>
<dbReference type="InterPro" id="IPR035908">
    <property type="entry name" value="F0_ATP_A_sf"/>
</dbReference>
<dbReference type="NCBIfam" id="TIGR01131">
    <property type="entry name" value="ATP_synt_6_or_A"/>
    <property type="match status" value="1"/>
</dbReference>
<dbReference type="NCBIfam" id="NF004482">
    <property type="entry name" value="PRK05815.2-4"/>
    <property type="match status" value="1"/>
</dbReference>
<dbReference type="PANTHER" id="PTHR11410">
    <property type="entry name" value="ATP SYNTHASE SUBUNIT A"/>
    <property type="match status" value="1"/>
</dbReference>
<dbReference type="PANTHER" id="PTHR11410:SF0">
    <property type="entry name" value="ATP SYNTHASE SUBUNIT A"/>
    <property type="match status" value="1"/>
</dbReference>
<dbReference type="Pfam" id="PF00119">
    <property type="entry name" value="ATP-synt_A"/>
    <property type="match status" value="1"/>
</dbReference>
<dbReference type="PRINTS" id="PR00123">
    <property type="entry name" value="ATPASEA"/>
</dbReference>
<dbReference type="SUPFAM" id="SSF81336">
    <property type="entry name" value="F1F0 ATP synthase subunit A"/>
    <property type="match status" value="1"/>
</dbReference>
<dbReference type="PROSITE" id="PS00449">
    <property type="entry name" value="ATPASE_A"/>
    <property type="match status" value="1"/>
</dbReference>
<comment type="function">
    <text evidence="1">Key component of the proton channel; it plays a direct role in the translocation of protons across the membrane.</text>
</comment>
<comment type="subunit">
    <text evidence="1">F-type ATPases have 2 components, CF(1) - the catalytic core - and CF(0) - the membrane proton channel. CF(1) has five subunits: alpha(3), beta(3), gamma(1), delta(1), epsilon(1). CF(0) has three main subunits: a(1), b(2) and c(9-12). The alpha and beta chains form an alternating ring which encloses part of the gamma chain. CF(1) is attached to CF(0) by a central stalk formed by the gamma and epsilon chains, while a peripheral stalk is formed by the delta and b chains.</text>
</comment>
<comment type="subcellular location">
    <subcellularLocation>
        <location evidence="1">Cell inner membrane</location>
        <topology evidence="1">Multi-pass membrane protein</topology>
    </subcellularLocation>
</comment>
<comment type="similarity">
    <text evidence="1">Belongs to the ATPase A chain family.</text>
</comment>
<comment type="sequence caution" evidence="2">
    <conflict type="erroneous initiation">
        <sequence resource="EMBL-CDS" id="AAV86962"/>
    </conflict>
</comment>
<accession>Q5P9R8</accession>
<keyword id="KW-0066">ATP synthesis</keyword>
<keyword id="KW-0997">Cell inner membrane</keyword>
<keyword id="KW-1003">Cell membrane</keyword>
<keyword id="KW-0138">CF(0)</keyword>
<keyword id="KW-0375">Hydrogen ion transport</keyword>
<keyword id="KW-0406">Ion transport</keyword>
<keyword id="KW-0472">Membrane</keyword>
<keyword id="KW-0812">Transmembrane</keyword>
<keyword id="KW-1133">Transmembrane helix</keyword>
<keyword id="KW-0813">Transport</keyword>
<protein>
    <recommendedName>
        <fullName evidence="1">ATP synthase subunit a</fullName>
    </recommendedName>
    <alternativeName>
        <fullName evidence="1">ATP synthase F0 sector subunit a</fullName>
    </alternativeName>
    <alternativeName>
        <fullName evidence="1">F-ATPase subunit 6</fullName>
    </alternativeName>
</protein>